<sequence>MNKLTAQNLLKKSRFLKYSLLTSISVGAVMAIPVERIAMGMDQEAFCAELSKKLSLEFSQSYEDTISTTQEKNNLSNNGPSNKSDMAEELANVTTKSLYKVRKMQAPEFKISENKFLNNLDSQTISKELDPNTYTTESISQKPEIILTASSTTVSTDSNSFVTVSTASSLKPVTSYQPTPDFKPNYSLGFNTPINTNLKIVRKLSFSSEQPQIVQHSKSMIPLMPTAPVVLPKSSIEIEPEMVSNIPRVDDTISIKSSEVREDIKGTKDQKTLVDQFNSSIGIWSKKTGKNKYDLNKDSSQK</sequence>
<protein>
    <recommendedName>
        <fullName>Uncharacterized protein RP016</fullName>
    </recommendedName>
</protein>
<name>Y016_RICPR</name>
<proteinExistence type="inferred from homology"/>
<organism>
    <name type="scientific">Rickettsia prowazekii (strain Madrid E)</name>
    <dbReference type="NCBI Taxonomy" id="272947"/>
    <lineage>
        <taxon>Bacteria</taxon>
        <taxon>Pseudomonadati</taxon>
        <taxon>Pseudomonadota</taxon>
        <taxon>Alphaproteobacteria</taxon>
        <taxon>Rickettsiales</taxon>
        <taxon>Rickettsiaceae</taxon>
        <taxon>Rickettsieae</taxon>
        <taxon>Rickettsia</taxon>
        <taxon>typhus group</taxon>
    </lineage>
</organism>
<feature type="signal peptide" evidence="1">
    <location>
        <begin position="1"/>
        <end position="28"/>
    </location>
</feature>
<feature type="chain" id="PRO_0000014221" description="Uncharacterized protein RP016">
    <location>
        <begin position="29"/>
        <end position="302"/>
    </location>
</feature>
<keyword id="KW-1185">Reference proteome</keyword>
<keyword id="KW-0732">Signal</keyword>
<dbReference type="EMBL" id="AJ235270">
    <property type="protein sequence ID" value="CAA14488.1"/>
    <property type="molecule type" value="Genomic_DNA"/>
</dbReference>
<dbReference type="PIR" id="A71709">
    <property type="entry name" value="A71709"/>
</dbReference>
<dbReference type="RefSeq" id="NP_220411.1">
    <property type="nucleotide sequence ID" value="NC_000963.1"/>
</dbReference>
<dbReference type="RefSeq" id="WP_010886191.1">
    <property type="nucleotide sequence ID" value="NC_000963.1"/>
</dbReference>
<dbReference type="STRING" id="272947.gene:17555099"/>
<dbReference type="EnsemblBacteria" id="CAA14488">
    <property type="protein sequence ID" value="CAA14488"/>
    <property type="gene ID" value="CAA14488"/>
</dbReference>
<dbReference type="KEGG" id="rpr:RP016"/>
<dbReference type="PATRIC" id="fig|272947.5.peg.16"/>
<dbReference type="eggNOG" id="COG1196">
    <property type="taxonomic scope" value="Bacteria"/>
</dbReference>
<dbReference type="HOGENOM" id="CLU_920945_0_0_5"/>
<dbReference type="Proteomes" id="UP000002480">
    <property type="component" value="Chromosome"/>
</dbReference>
<evidence type="ECO:0000255" key="1"/>
<gene>
    <name type="ordered locus">RP016</name>
</gene>
<accession>Q9ZEC7</accession>
<reference key="1">
    <citation type="journal article" date="1998" name="Nature">
        <title>The genome sequence of Rickettsia prowazekii and the origin of mitochondria.</title>
        <authorList>
            <person name="Andersson S.G.E."/>
            <person name="Zomorodipour A."/>
            <person name="Andersson J.O."/>
            <person name="Sicheritz-Ponten T."/>
            <person name="Alsmark U.C.M."/>
            <person name="Podowski R.M."/>
            <person name="Naeslund A.K."/>
            <person name="Eriksson A.-S."/>
            <person name="Winkler H.H."/>
            <person name="Kurland C.G."/>
        </authorList>
    </citation>
    <scope>NUCLEOTIDE SEQUENCE [LARGE SCALE GENOMIC DNA]</scope>
    <source>
        <strain>Madrid E</strain>
    </source>
</reference>